<comment type="function">
    <text evidence="4">Catalyzes the cyclization of 2-methylgeranyl diphosphate (2-MeGPP) to 2-methylisoborneol (2-MIB), which likely involves the intermediacy of 2-methyllinalyl diphosphate.</text>
</comment>
<comment type="catalytic activity">
    <reaction>
        <text>(E)-2-methylgeranyl diphosphate + H2O = 2-methylisoborneol + diphosphate</text>
        <dbReference type="Rhea" id="RHEA:32571"/>
        <dbReference type="ChEBI" id="CHEBI:15377"/>
        <dbReference type="ChEBI" id="CHEBI:33019"/>
        <dbReference type="ChEBI" id="CHEBI:61984"/>
        <dbReference type="ChEBI" id="CHEBI:61987"/>
        <dbReference type="EC" id="4.2.3.118"/>
    </reaction>
</comment>
<comment type="cofactor">
    <cofactor evidence="1">
        <name>Mg(2+)</name>
        <dbReference type="ChEBI" id="CHEBI:18420"/>
    </cofactor>
</comment>
<comment type="miscellaneous">
    <text>2-MIB is a volatile organic compound that has an unusually low odor threshold. Together with geosmin, methylisoborneol is responsible for the characteristic smell of moist soil as well as unpleasant taste and odor episodes associated with public water supplies and contamination of various foodstuffs, including fish, wine, and beer.</text>
</comment>
<comment type="similarity">
    <text evidence="3">Belongs to the terpene synthase family. 2-methylisoborneol synthase subfamily.</text>
</comment>
<organism>
    <name type="scientific">Streptomyces ambofaciens (strain ATCC 23877 / 3486 / DSM 40053 / JCM 4204 / NBRC 12836 / NRRL B-2516)</name>
    <dbReference type="NCBI Taxonomy" id="278992"/>
    <lineage>
        <taxon>Bacteria</taxon>
        <taxon>Bacillati</taxon>
        <taxon>Actinomycetota</taxon>
        <taxon>Actinomycetes</taxon>
        <taxon>Kitasatosporales</taxon>
        <taxon>Streptomycetaceae</taxon>
        <taxon>Streptomyces</taxon>
    </lineage>
</organism>
<protein>
    <recommendedName>
        <fullName>2-methylisoborneol synthase</fullName>
        <shortName>2-MIB synthase</shortName>
        <ecNumber>4.2.3.118</ecNumber>
    </recommendedName>
</protein>
<name>MIBS_STRA7</name>
<gene>
    <name evidence="5" type="ORF">SAM23877_0409</name>
    <name evidence="6" type="ORF">SAML0357</name>
</gene>
<proteinExistence type="evidence at protein level"/>
<feature type="chain" id="PRO_0000403384" description="2-methylisoborneol synthase">
    <location>
        <begin position="1"/>
        <end position="440"/>
    </location>
</feature>
<feature type="region of interest" description="Disordered" evidence="2">
    <location>
        <begin position="1"/>
        <end position="116"/>
    </location>
</feature>
<feature type="compositionally biased region" description="Low complexity" evidence="2">
    <location>
        <begin position="17"/>
        <end position="27"/>
    </location>
</feature>
<feature type="compositionally biased region" description="Pro residues" evidence="2">
    <location>
        <begin position="48"/>
        <end position="58"/>
    </location>
</feature>
<feature type="compositionally biased region" description="Low complexity" evidence="2">
    <location>
        <begin position="59"/>
        <end position="75"/>
    </location>
</feature>
<feature type="compositionally biased region" description="Pro residues" evidence="2">
    <location>
        <begin position="102"/>
        <end position="111"/>
    </location>
</feature>
<feature type="binding site" evidence="1">
    <location>
        <position position="197"/>
    </location>
    <ligand>
        <name>Mg(2+)</name>
        <dbReference type="ChEBI" id="CHEBI:18420"/>
    </ligand>
</feature>
<feature type="binding site" evidence="1">
    <location>
        <position position="198"/>
    </location>
    <ligand>
        <name>Mg(2+)</name>
        <dbReference type="ChEBI" id="CHEBI:18420"/>
    </ligand>
</feature>
<feature type="binding site" evidence="1">
    <location>
        <position position="202"/>
    </location>
    <ligand>
        <name>Mg(2+)</name>
        <dbReference type="ChEBI" id="CHEBI:18420"/>
    </ligand>
</feature>
<feature type="binding site" evidence="1">
    <location>
        <position position="345"/>
    </location>
    <ligand>
        <name>Mg(2+)</name>
        <dbReference type="ChEBI" id="CHEBI:18420"/>
    </ligand>
</feature>
<feature type="binding site" evidence="1">
    <location>
        <position position="349"/>
    </location>
    <ligand>
        <name>Mg(2+)</name>
        <dbReference type="ChEBI" id="CHEBI:18420"/>
    </ligand>
</feature>
<feature type="binding site" evidence="1">
    <location>
        <position position="353"/>
    </location>
    <ligand>
        <name>Mg(2+)</name>
        <dbReference type="ChEBI" id="CHEBI:18420"/>
    </ligand>
</feature>
<evidence type="ECO:0000250" key="1"/>
<evidence type="ECO:0000256" key="2">
    <source>
        <dbReference type="SAM" id="MobiDB-lite"/>
    </source>
</evidence>
<evidence type="ECO:0000305" key="3"/>
<evidence type="ECO:0000305" key="4">
    <source>
    </source>
</evidence>
<evidence type="ECO:0000312" key="5">
    <source>
        <dbReference type="EMBL" id="AKZ53458.1"/>
    </source>
</evidence>
<evidence type="ECO:0000312" key="6">
    <source>
        <dbReference type="EMBL" id="CAJ89344.1"/>
    </source>
</evidence>
<dbReference type="EC" id="4.2.3.118"/>
<dbReference type="EMBL" id="AM238663">
    <property type="protein sequence ID" value="CAJ89344.1"/>
    <property type="molecule type" value="Genomic_DNA"/>
</dbReference>
<dbReference type="EMBL" id="CP012382">
    <property type="protein sequence ID" value="AKZ53458.1"/>
    <property type="molecule type" value="Genomic_DNA"/>
</dbReference>
<dbReference type="RefSeq" id="WP_053126184.1">
    <property type="nucleotide sequence ID" value="NZ_CP012382.1"/>
</dbReference>
<dbReference type="SMR" id="A3KI17"/>
<dbReference type="STRING" id="1889.SAM40697_0346"/>
<dbReference type="KEGG" id="ag:CAJ89344"/>
<dbReference type="KEGG" id="samb:SAM23877_0409"/>
<dbReference type="Proteomes" id="UP000061018">
    <property type="component" value="Chromosome"/>
</dbReference>
<dbReference type="GO" id="GO:0046872">
    <property type="term" value="F:metal ion binding"/>
    <property type="evidence" value="ECO:0007669"/>
    <property type="project" value="UniProtKB-KW"/>
</dbReference>
<dbReference type="GO" id="GO:0010333">
    <property type="term" value="F:terpene synthase activity"/>
    <property type="evidence" value="ECO:0000250"/>
    <property type="project" value="UniProtKB"/>
</dbReference>
<dbReference type="GO" id="GO:0042214">
    <property type="term" value="P:terpene metabolic process"/>
    <property type="evidence" value="ECO:0000314"/>
    <property type="project" value="UniProtKB"/>
</dbReference>
<dbReference type="FunFam" id="1.10.600.10:FF:000019">
    <property type="entry name" value="2-methylisoborneol synthase"/>
    <property type="match status" value="1"/>
</dbReference>
<dbReference type="Gene3D" id="1.10.600.10">
    <property type="entry name" value="Farnesyl Diphosphate Synthase"/>
    <property type="match status" value="1"/>
</dbReference>
<dbReference type="InterPro" id="IPR008949">
    <property type="entry name" value="Isoprenoid_synthase_dom_sf"/>
</dbReference>
<dbReference type="InterPro" id="IPR047945">
    <property type="entry name" value="MIB_synthase"/>
</dbReference>
<dbReference type="InterPro" id="IPR034686">
    <property type="entry name" value="Terpene_cyclase-like_2"/>
</dbReference>
<dbReference type="NCBIfam" id="NF041167">
    <property type="entry name" value="f2_encap_cargo2"/>
    <property type="match status" value="1"/>
</dbReference>
<dbReference type="PANTHER" id="PTHR35201:SF4">
    <property type="entry name" value="BETA-PINACENE SYNTHASE-RELATED"/>
    <property type="match status" value="1"/>
</dbReference>
<dbReference type="PANTHER" id="PTHR35201">
    <property type="entry name" value="TERPENE SYNTHASE"/>
    <property type="match status" value="1"/>
</dbReference>
<dbReference type="Pfam" id="PF19086">
    <property type="entry name" value="Terpene_syn_C_2"/>
    <property type="match status" value="1"/>
</dbReference>
<dbReference type="SFLD" id="SFLDS00005">
    <property type="entry name" value="Isoprenoid_Synthase_Type_I"/>
    <property type="match status" value="1"/>
</dbReference>
<dbReference type="SFLD" id="SFLDG01020">
    <property type="entry name" value="Terpene_Cyclase_Like_2"/>
    <property type="match status" value="1"/>
</dbReference>
<dbReference type="SUPFAM" id="SSF48576">
    <property type="entry name" value="Terpenoid synthases"/>
    <property type="match status" value="1"/>
</dbReference>
<accession>A3KI17</accession>
<accession>A0A0K2AKB9</accession>
<reference key="1">
    <citation type="journal article" date="2006" name="Mol. Biol. Evol.">
        <title>Evolution of the terminal regions of the Streptomyces linear chromosome.</title>
        <authorList>
            <person name="Choulet F."/>
            <person name="Aigle B."/>
            <person name="Gallois A."/>
            <person name="Mangenot S."/>
            <person name="Gerbaud C."/>
            <person name="Truong C."/>
            <person name="Francou F.-X."/>
            <person name="Fourrier C."/>
            <person name="Guerineau M."/>
            <person name="Decaris B."/>
            <person name="Barbe V."/>
            <person name="Pernodet J.-L."/>
            <person name="Leblond P."/>
        </authorList>
    </citation>
    <scope>NUCLEOTIDE SEQUENCE [LARGE SCALE GENOMIC DNA]</scope>
    <source>
        <strain>ATCC 23877 / 3486 / DSM 40053 / JCM 4204 / NBRC 12836 / NRRL B-2516</strain>
    </source>
</reference>
<reference key="2">
    <citation type="journal article" date="2015" name="J. Biotechnol.">
        <title>Complete genome sequence of Streptomyces ambofaciens ATCC 23877, the spiramycin producer.</title>
        <authorList>
            <person name="Thibessard A."/>
            <person name="Haas D."/>
            <person name="Gerbaud C."/>
            <person name="Aigle B."/>
            <person name="Lautru S."/>
            <person name="Pernodet J.L."/>
            <person name="Leblond P."/>
        </authorList>
    </citation>
    <scope>NUCLEOTIDE SEQUENCE [LARGE SCALE GENOMIC DNA]</scope>
    <source>
        <strain>ATCC 23877 / 3486 / DSM 40053 / JCM 4204 / NBRC 12836 / NRRL B-2516</strain>
    </source>
</reference>
<reference key="3">
    <citation type="journal article" date="2008" name="Proc. Natl. Acad. Sci. U.S.A.">
        <title>Identification and functional analysis of genes controlling biosynthesis of 2-methylisoborneol.</title>
        <authorList>
            <person name="Komatsu M."/>
            <person name="Tsuda M."/>
            <person name="Omura S."/>
            <person name="Oikawa H."/>
            <person name="Ikeda H."/>
        </authorList>
    </citation>
    <scope>FUNCTION IN 2-METHYLISOBORNEOL BIOSYNTHESIS</scope>
    <scope>PATHWAY</scope>
    <source>
        <strain>ATCC 23877 / 3486 / DSM 40053 / JCM 4204 / NBRC 12836 / NRRL B-2516</strain>
    </source>
</reference>
<keyword id="KW-0456">Lyase</keyword>
<keyword id="KW-0460">Magnesium</keyword>
<keyword id="KW-0479">Metal-binding</keyword>
<sequence>MPDSGPLGPHSPDHRPTPATTVPDAPASKPPDVAVTPTASEFLAALHPPVPIPSPSPPSGSASAAADTPDATTVGSALQRILRGPTGPGTAALALSVRHDPPSLPGSPAPAEPAAGRAVPGLYHHPVPEPDPARVEEVSRRIKRWAEDEVQLYPEDWEGEFDGFSVGRYMVACHPDAPTVDHLMLATRLMVAENAVDDCYCEDHGGSPVGLGGRLLLAHTAIDPFHTTAEYAPPWRESLTSDAPRRAYRSAMDYFVRAATPSQADRYRHDMARLHLGYLAEAAWAQTDHVPEVWEYLAMRQFNNFRPCPTITDTVGGYELPADLHARPDMQRVIALAGNATTIVNDLYSYTKELDSPGRHLNLPVVIAERERLSERDAYLKAVEVHNELQHAFEAAAAELAKACPLPTVLRFLKGVAAWVDGNHDWHRTNTYRYSLPDFW</sequence>